<reference key="1">
    <citation type="journal article" date="1999" name="Nature">
        <title>Sequence and analysis of chromosome 4 of the plant Arabidopsis thaliana.</title>
        <authorList>
            <person name="Mayer K.F.X."/>
            <person name="Schueller C."/>
            <person name="Wambutt R."/>
            <person name="Murphy G."/>
            <person name="Volckaert G."/>
            <person name="Pohl T."/>
            <person name="Duesterhoeft A."/>
            <person name="Stiekema W."/>
            <person name="Entian K.-D."/>
            <person name="Terryn N."/>
            <person name="Harris B."/>
            <person name="Ansorge W."/>
            <person name="Brandt P."/>
            <person name="Grivell L.A."/>
            <person name="Rieger M."/>
            <person name="Weichselgartner M."/>
            <person name="de Simone V."/>
            <person name="Obermaier B."/>
            <person name="Mache R."/>
            <person name="Mueller M."/>
            <person name="Kreis M."/>
            <person name="Delseny M."/>
            <person name="Puigdomenech P."/>
            <person name="Watson M."/>
            <person name="Schmidtheini T."/>
            <person name="Reichert B."/>
            <person name="Portetelle D."/>
            <person name="Perez-Alonso M."/>
            <person name="Boutry M."/>
            <person name="Bancroft I."/>
            <person name="Vos P."/>
            <person name="Hoheisel J."/>
            <person name="Zimmermann W."/>
            <person name="Wedler H."/>
            <person name="Ridley P."/>
            <person name="Langham S.-A."/>
            <person name="McCullagh B."/>
            <person name="Bilham L."/>
            <person name="Robben J."/>
            <person name="van der Schueren J."/>
            <person name="Grymonprez B."/>
            <person name="Chuang Y.-J."/>
            <person name="Vandenbussche F."/>
            <person name="Braeken M."/>
            <person name="Weltjens I."/>
            <person name="Voet M."/>
            <person name="Bastiaens I."/>
            <person name="Aert R."/>
            <person name="Defoor E."/>
            <person name="Weitzenegger T."/>
            <person name="Bothe G."/>
            <person name="Ramsperger U."/>
            <person name="Hilbert H."/>
            <person name="Braun M."/>
            <person name="Holzer E."/>
            <person name="Brandt A."/>
            <person name="Peters S."/>
            <person name="van Staveren M."/>
            <person name="Dirkse W."/>
            <person name="Mooijman P."/>
            <person name="Klein Lankhorst R."/>
            <person name="Rose M."/>
            <person name="Hauf J."/>
            <person name="Koetter P."/>
            <person name="Berneiser S."/>
            <person name="Hempel S."/>
            <person name="Feldpausch M."/>
            <person name="Lamberth S."/>
            <person name="Van den Daele H."/>
            <person name="De Keyser A."/>
            <person name="Buysshaert C."/>
            <person name="Gielen J."/>
            <person name="Villarroel R."/>
            <person name="De Clercq R."/>
            <person name="van Montagu M."/>
            <person name="Rogers J."/>
            <person name="Cronin A."/>
            <person name="Quail M.A."/>
            <person name="Bray-Allen S."/>
            <person name="Clark L."/>
            <person name="Doggett J."/>
            <person name="Hall S."/>
            <person name="Kay M."/>
            <person name="Lennard N."/>
            <person name="McLay K."/>
            <person name="Mayes R."/>
            <person name="Pettett A."/>
            <person name="Rajandream M.A."/>
            <person name="Lyne M."/>
            <person name="Benes V."/>
            <person name="Rechmann S."/>
            <person name="Borkova D."/>
            <person name="Bloecker H."/>
            <person name="Scharfe M."/>
            <person name="Grimm M."/>
            <person name="Loehnert T.-H."/>
            <person name="Dose S."/>
            <person name="de Haan M."/>
            <person name="Maarse A.C."/>
            <person name="Schaefer M."/>
            <person name="Mueller-Auer S."/>
            <person name="Gabel C."/>
            <person name="Fuchs M."/>
            <person name="Fartmann B."/>
            <person name="Granderath K."/>
            <person name="Dauner D."/>
            <person name="Herzl A."/>
            <person name="Neumann S."/>
            <person name="Argiriou A."/>
            <person name="Vitale D."/>
            <person name="Liguori R."/>
            <person name="Piravandi E."/>
            <person name="Massenet O."/>
            <person name="Quigley F."/>
            <person name="Clabauld G."/>
            <person name="Muendlein A."/>
            <person name="Felber R."/>
            <person name="Schnabl S."/>
            <person name="Hiller R."/>
            <person name="Schmidt W."/>
            <person name="Lecharny A."/>
            <person name="Aubourg S."/>
            <person name="Chefdor F."/>
            <person name="Cooke R."/>
            <person name="Berger C."/>
            <person name="Monfort A."/>
            <person name="Casacuberta E."/>
            <person name="Gibbons T."/>
            <person name="Weber N."/>
            <person name="Vandenbol M."/>
            <person name="Bargues M."/>
            <person name="Terol J."/>
            <person name="Torres A."/>
            <person name="Perez-Perez A."/>
            <person name="Purnelle B."/>
            <person name="Bent E."/>
            <person name="Johnson S."/>
            <person name="Tacon D."/>
            <person name="Jesse T."/>
            <person name="Heijnen L."/>
            <person name="Schwarz S."/>
            <person name="Scholler P."/>
            <person name="Heber S."/>
            <person name="Francs P."/>
            <person name="Bielke C."/>
            <person name="Frishman D."/>
            <person name="Haase D."/>
            <person name="Lemcke K."/>
            <person name="Mewes H.-W."/>
            <person name="Stocker S."/>
            <person name="Zaccaria P."/>
            <person name="Bevan M."/>
            <person name="Wilson R.K."/>
            <person name="de la Bastide M."/>
            <person name="Habermann K."/>
            <person name="Parnell L."/>
            <person name="Dedhia N."/>
            <person name="Gnoj L."/>
            <person name="Schutz K."/>
            <person name="Huang E."/>
            <person name="Spiegel L."/>
            <person name="Sekhon M."/>
            <person name="Murray J."/>
            <person name="Sheet P."/>
            <person name="Cordes M."/>
            <person name="Abu-Threideh J."/>
            <person name="Stoneking T."/>
            <person name="Kalicki J."/>
            <person name="Graves T."/>
            <person name="Harmon G."/>
            <person name="Edwards J."/>
            <person name="Latreille P."/>
            <person name="Courtney L."/>
            <person name="Cloud J."/>
            <person name="Abbott A."/>
            <person name="Scott K."/>
            <person name="Johnson D."/>
            <person name="Minx P."/>
            <person name="Bentley D."/>
            <person name="Fulton B."/>
            <person name="Miller N."/>
            <person name="Greco T."/>
            <person name="Kemp K."/>
            <person name="Kramer J."/>
            <person name="Fulton L."/>
            <person name="Mardis E."/>
            <person name="Dante M."/>
            <person name="Pepin K."/>
            <person name="Hillier L.W."/>
            <person name="Nelson J."/>
            <person name="Spieth J."/>
            <person name="Ryan E."/>
            <person name="Andrews S."/>
            <person name="Geisel C."/>
            <person name="Layman D."/>
            <person name="Du H."/>
            <person name="Ali J."/>
            <person name="Berghoff A."/>
            <person name="Jones K."/>
            <person name="Drone K."/>
            <person name="Cotton M."/>
            <person name="Joshu C."/>
            <person name="Antonoiu B."/>
            <person name="Zidanic M."/>
            <person name="Strong C."/>
            <person name="Sun H."/>
            <person name="Lamar B."/>
            <person name="Yordan C."/>
            <person name="Ma P."/>
            <person name="Zhong J."/>
            <person name="Preston R."/>
            <person name="Vil D."/>
            <person name="Shekher M."/>
            <person name="Matero A."/>
            <person name="Shah R."/>
            <person name="Swaby I.K."/>
            <person name="O'Shaughnessy A."/>
            <person name="Rodriguez M."/>
            <person name="Hoffman J."/>
            <person name="Till S."/>
            <person name="Granat S."/>
            <person name="Shohdy N."/>
            <person name="Hasegawa A."/>
            <person name="Hameed A."/>
            <person name="Lodhi M."/>
            <person name="Johnson A."/>
            <person name="Chen E."/>
            <person name="Marra M.A."/>
            <person name="Martienssen R."/>
            <person name="McCombie W.R."/>
        </authorList>
    </citation>
    <scope>NUCLEOTIDE SEQUENCE [LARGE SCALE GENOMIC DNA]</scope>
    <source>
        <strain>cv. Columbia</strain>
    </source>
</reference>
<reference key="2">
    <citation type="journal article" date="2017" name="Plant J.">
        <title>Araport11: a complete reannotation of the Arabidopsis thaliana reference genome.</title>
        <authorList>
            <person name="Cheng C.Y."/>
            <person name="Krishnakumar V."/>
            <person name="Chan A.P."/>
            <person name="Thibaud-Nissen F."/>
            <person name="Schobel S."/>
            <person name="Town C.D."/>
        </authorList>
    </citation>
    <scope>GENOME REANNOTATION</scope>
    <source>
        <strain>cv. Columbia</strain>
    </source>
</reference>
<reference key="3">
    <citation type="submission" date="2006-07" db="EMBL/GenBank/DDBJ databases">
        <title>Large-scale analysis of RIKEN Arabidopsis full-length (RAFL) cDNAs.</title>
        <authorList>
            <person name="Totoki Y."/>
            <person name="Seki M."/>
            <person name="Ishida J."/>
            <person name="Nakajima M."/>
            <person name="Enju A."/>
            <person name="Kamiya A."/>
            <person name="Narusaka M."/>
            <person name="Shin-i T."/>
            <person name="Nakagawa M."/>
            <person name="Sakamoto N."/>
            <person name="Oishi K."/>
            <person name="Kohara Y."/>
            <person name="Kobayashi M."/>
            <person name="Toyoda A."/>
            <person name="Sakaki Y."/>
            <person name="Sakurai T."/>
            <person name="Iida K."/>
            <person name="Akiyama K."/>
            <person name="Satou M."/>
            <person name="Toyoda T."/>
            <person name="Konagaya A."/>
            <person name="Carninci P."/>
            <person name="Kawai J."/>
            <person name="Hayashizaki Y."/>
            <person name="Shinozaki K."/>
        </authorList>
    </citation>
    <scope>NUCLEOTIDE SEQUENCE [LARGE SCALE MRNA]</scope>
    <source>
        <strain>cv. Columbia</strain>
    </source>
</reference>
<reference key="4">
    <citation type="journal article" date="2002" name="J. Biol. Chem.">
        <title>Functional cloning and characterization of a plant efflux carrier for multidrug and heavy metal detoxification.</title>
        <authorList>
            <person name="Li L."/>
            <person name="He Z."/>
            <person name="Pandey G.K."/>
            <person name="Tsuchiya T."/>
            <person name="Luan S."/>
        </authorList>
    </citation>
    <scope>GENE FAMILY</scope>
    <scope>NOMENCLATURE</scope>
</reference>
<reference key="5">
    <citation type="journal article" date="2003" name="Eur. J. Biochem.">
        <title>The multidrug/oligosaccharidyl-lipid/polysaccharide (MOP) exporter superfamily.</title>
        <authorList>
            <person name="Hvorup R.N."/>
            <person name="Winnen B."/>
            <person name="Chang A.B."/>
            <person name="Jiang Y."/>
            <person name="Zhou X.F."/>
            <person name="Saier M.H. Jr."/>
        </authorList>
    </citation>
    <scope>GENE FAMILY</scope>
</reference>
<reference key="6">
    <citation type="journal article" date="2007" name="Mol. Cell. Proteomics">
        <title>A proteomics dissection of Arabidopsis thaliana vacuoles isolated from cell culture.</title>
        <authorList>
            <person name="Jaquinod M."/>
            <person name="Villiers F."/>
            <person name="Kieffer-Jaquinod S."/>
            <person name="Hugouvieux V."/>
            <person name="Bruley C."/>
            <person name="Garin J."/>
            <person name="Bourguignon J."/>
        </authorList>
    </citation>
    <scope>IDENTIFICATION BY MASS SPECTROMETRY</scope>
    <scope>SUBCELLULAR LOCATION [LARGE SCALE ANALYSIS]</scope>
</reference>
<reference key="7">
    <citation type="journal article" date="2010" name="J. Exp. Bot.">
        <title>An Arabidopsis flavonoid transporter is required for anther dehiscence and pollen development.</title>
        <authorList>
            <person name="Thompson E.P."/>
            <person name="Wilkins C."/>
            <person name="Demidchik V."/>
            <person name="Davies J.M."/>
            <person name="Glover B.J."/>
        </authorList>
    </citation>
    <scope>TISSUE SPECIFICITY</scope>
    <scope>DISRUPTION PHENOTYPE</scope>
    <scope>FUNCTION</scope>
</reference>
<reference key="8">
    <citation type="journal article" date="2010" name="Plant Signal. Behav.">
        <title>Identifying the transporters of different flavonoids in plants.</title>
        <authorList>
            <person name="Thompson E.P."/>
            <person name="Davies J.M."/>
            <person name="Glover B.J."/>
        </authorList>
    </citation>
    <scope>DISRUPTION PHENOTYPE</scope>
</reference>
<feature type="chain" id="PRO_0000434076" description="Protein DETOXIFICATION 35">
    <location>
        <begin position="1"/>
        <end position="488"/>
    </location>
</feature>
<feature type="transmembrane region" description="Helical" evidence="1">
    <location>
        <begin position="38"/>
        <end position="58"/>
    </location>
</feature>
<feature type="transmembrane region" description="Helical" evidence="1">
    <location>
        <begin position="73"/>
        <end position="93"/>
    </location>
</feature>
<feature type="transmembrane region" description="Helical" evidence="1">
    <location>
        <begin position="121"/>
        <end position="141"/>
    </location>
</feature>
<feature type="transmembrane region" description="Helical" evidence="1">
    <location>
        <begin position="150"/>
        <end position="170"/>
    </location>
</feature>
<feature type="transmembrane region" description="Helical" evidence="1">
    <location>
        <begin position="187"/>
        <end position="207"/>
    </location>
</feature>
<feature type="transmembrane region" description="Helical" evidence="1">
    <location>
        <begin position="218"/>
        <end position="238"/>
    </location>
</feature>
<feature type="transmembrane region" description="Helical" evidence="1">
    <location>
        <begin position="262"/>
        <end position="282"/>
    </location>
</feature>
<feature type="transmembrane region" description="Helical" evidence="1">
    <location>
        <begin position="296"/>
        <end position="316"/>
    </location>
</feature>
<feature type="transmembrane region" description="Helical" evidence="1">
    <location>
        <begin position="336"/>
        <end position="356"/>
    </location>
</feature>
<feature type="transmembrane region" description="Helical" evidence="1">
    <location>
        <begin position="379"/>
        <end position="401"/>
    </location>
</feature>
<feature type="transmembrane region" description="Helical" evidence="1">
    <location>
        <begin position="408"/>
        <end position="428"/>
    </location>
</feature>
<feature type="transmembrane region" description="Helical" evidence="1">
    <location>
        <begin position="439"/>
        <end position="459"/>
    </location>
</feature>
<feature type="sequence conflict" description="In Ref. 3; BAE98568." evidence="7" ref="3">
    <original>C</original>
    <variation>Y</variation>
    <location>
        <position position="127"/>
    </location>
</feature>
<comment type="function">
    <text evidence="3">Multidrug and toxin efflux transporter involved in flavonoid metabolism. Required for proper reproductive development.</text>
</comment>
<comment type="subcellular location">
    <subcellularLocation>
        <location evidence="2">Vacuole membrane</location>
        <topology evidence="2">Multi-pass membrane protein</topology>
    </subcellularLocation>
</comment>
<comment type="alternative products">
    <event type="alternative splicing"/>
    <isoform>
        <id>F4JTB3-1</id>
        <name>1</name>
        <sequence type="displayed"/>
    </isoform>
    <text>A number of isoforms are produced. According to EST sequences.</text>
</comment>
<comment type="tissue specificity">
    <text evidence="3">Highly expressed in inflorescence tissues, especially in floral epidermal guard cells including those of the anthers, stigma, siliques and nectaries. Also detected in the meristematic zone of the root apex and in the elongation zone through to the fully expanded cells of the differentiation zone.</text>
</comment>
<comment type="disruption phenotype">
    <text evidence="3 4">Affected flavonoid levels in the plant. Altered root growth, seed development and germination, and pollen development and release (PubMed:19995827). Enhanced growth and early flowering in comparison to the wild type (PubMed:20505354).</text>
</comment>
<comment type="similarity">
    <text evidence="7">Belongs to the multi antimicrobial extrusion (MATE) (TC 2.A.66.1) family.</text>
</comment>
<comment type="sequence caution" evidence="7">
    <conflict type="erroneous gene model prediction">
        <sequence resource="EMBL-CDS" id="CAB43695"/>
    </conflict>
</comment>
<comment type="sequence caution" evidence="7">
    <conflict type="erroneous gene model prediction">
        <sequence resource="EMBL-CDS" id="CAB81374"/>
    </conflict>
</comment>
<organism>
    <name type="scientific">Arabidopsis thaliana</name>
    <name type="common">Mouse-ear cress</name>
    <dbReference type="NCBI Taxonomy" id="3702"/>
    <lineage>
        <taxon>Eukaryota</taxon>
        <taxon>Viridiplantae</taxon>
        <taxon>Streptophyta</taxon>
        <taxon>Embryophyta</taxon>
        <taxon>Tracheophyta</taxon>
        <taxon>Spermatophyta</taxon>
        <taxon>Magnoliopsida</taxon>
        <taxon>eudicotyledons</taxon>
        <taxon>Gunneridae</taxon>
        <taxon>Pentapetalae</taxon>
        <taxon>rosids</taxon>
        <taxon>malvids</taxon>
        <taxon>Brassicales</taxon>
        <taxon>Brassicaceae</taxon>
        <taxon>Camelineae</taxon>
        <taxon>Arabidopsis</taxon>
    </lineage>
</organism>
<gene>
    <name evidence="5" type="primary">DTX35</name>
    <name evidence="6" type="synonym">FFT</name>
    <name evidence="8" type="ordered locus">At4g25640</name>
    <name evidence="9" type="ORF">L73G19.20</name>
</gene>
<protein>
    <recommendedName>
        <fullName evidence="5">Protein DETOXIFICATION 35</fullName>
        <shortName evidence="5">AtDTX35</shortName>
    </recommendedName>
    <alternativeName>
        <fullName evidence="7">Multidrug and toxic compound extrusion protein 35</fullName>
        <shortName evidence="7">MATE protein 35</shortName>
    </alternativeName>
    <alternativeName>
        <fullName evidence="6">Protein DETOXIFYING EFFLUX CARRIER 35</fullName>
        <shortName evidence="6">Protein DTX5</shortName>
    </alternativeName>
    <alternativeName>
        <fullName evidence="6">Protein FLOWER FLAVONOID TRANSPORTER</fullName>
        <shortName evidence="6">Protein FFT</shortName>
    </alternativeName>
</protein>
<proteinExistence type="evidence at protein level"/>
<keyword id="KW-0025">Alternative splicing</keyword>
<keyword id="KW-0284">Flavonoid biosynthesis</keyword>
<keyword id="KW-0472">Membrane</keyword>
<keyword id="KW-1185">Reference proteome</keyword>
<keyword id="KW-0812">Transmembrane</keyword>
<keyword id="KW-1133">Transmembrane helix</keyword>
<keyword id="KW-0813">Transport</keyword>
<keyword id="KW-0926">Vacuole</keyword>
<name>DTX35_ARATH</name>
<evidence type="ECO:0000255" key="1"/>
<evidence type="ECO:0000269" key="2">
    <source>
    </source>
</evidence>
<evidence type="ECO:0000269" key="3">
    <source>
    </source>
</evidence>
<evidence type="ECO:0000269" key="4">
    <source>
    </source>
</evidence>
<evidence type="ECO:0000303" key="5">
    <source>
    </source>
</evidence>
<evidence type="ECO:0000303" key="6">
    <source>
    </source>
</evidence>
<evidence type="ECO:0000305" key="7"/>
<evidence type="ECO:0000312" key="8">
    <source>
        <dbReference type="Araport" id="AT4G25640"/>
    </source>
</evidence>
<evidence type="ECO:0000312" key="9">
    <source>
        <dbReference type="EMBL" id="CAB43695.1"/>
    </source>
</evidence>
<accession>F4JTB3</accession>
<accession>Q0WWD0</accession>
<accession>Q9SZZ2</accession>
<sequence length="488" mass="53225">MDPTAPLLTHGGEVEEDYAPARSWTDVKRVLSTESAKLWMIAAPVGFNIICQYGVSSVTNIFVGHIGEVELSAVSISLSVIGTFSFGFLLGMGSALETLCGQAYGAGQVNMLGVYMQRSWIILFVSCFFLLPIYIFATPVLRLLGQAEEIAVPAGQFTLLTIPQLFSLAFNFPTSKFLQAQSKVVAIAWIGFVALSLHVIMLWLFIIEFGWGTNGAALAFNITNWGTAIAQIVYVIGWCNEGWTGLSWLAFKEIWAFVRLSIASAVMLCLEIWYMMSIIVLTGRLDNAVIAVDSLSICMNINGLEAMLFIGINAAISVRVSNELGLGRPRAAKYSVYVTVFQSLLIGLVFMVAIIIARDHFAIIFTSSKVLQRAVSKLAYLLGITMVLNSVQPVVSGVAVGGGWQGLVAYINLGCYYIFGLPFGYLLGYIANFGVMGLWSGMIAGTALQTLLLLIVLYKTNWNKEVEETMERMKKWGGSETTSKDILA</sequence>
<dbReference type="EMBL" id="AL050400">
    <property type="protein sequence ID" value="CAB43695.1"/>
    <property type="status" value="ALT_SEQ"/>
    <property type="molecule type" value="Genomic_DNA"/>
</dbReference>
<dbReference type="EMBL" id="AL161563">
    <property type="protein sequence ID" value="CAB81374.1"/>
    <property type="status" value="ALT_SEQ"/>
    <property type="molecule type" value="Genomic_DNA"/>
</dbReference>
<dbReference type="EMBL" id="CP002687">
    <property type="protein sequence ID" value="AEE85086.1"/>
    <property type="molecule type" value="Genomic_DNA"/>
</dbReference>
<dbReference type="EMBL" id="AK226424">
    <property type="protein sequence ID" value="BAE98568.1"/>
    <property type="molecule type" value="mRNA"/>
</dbReference>
<dbReference type="PIR" id="T09556">
    <property type="entry name" value="T09556"/>
</dbReference>
<dbReference type="RefSeq" id="NP_001329321.1">
    <property type="nucleotide sequence ID" value="NM_001341758.1"/>
</dbReference>
<dbReference type="RefSeq" id="NP_194294.2">
    <molecule id="F4JTB3-1"/>
    <property type="nucleotide sequence ID" value="NM_118696.5"/>
</dbReference>
<dbReference type="SMR" id="F4JTB3"/>
<dbReference type="FunCoup" id="F4JTB3">
    <property type="interactions" value="16"/>
</dbReference>
<dbReference type="STRING" id="3702.F4JTB3"/>
<dbReference type="PaxDb" id="3702-AT4G25640.2"/>
<dbReference type="ProteomicsDB" id="222223">
    <molecule id="F4JTB3-1"/>
</dbReference>
<dbReference type="EnsemblPlants" id="AT4G25640.1">
    <molecule id="F4JTB3-1"/>
    <property type="protein sequence ID" value="AT4G25640.1"/>
    <property type="gene ID" value="AT4G25640"/>
</dbReference>
<dbReference type="GeneID" id="828669"/>
<dbReference type="Gramene" id="AT4G25640.1">
    <molecule id="F4JTB3-1"/>
    <property type="protein sequence ID" value="AT4G25640.1"/>
    <property type="gene ID" value="AT4G25640"/>
</dbReference>
<dbReference type="KEGG" id="ath:AT4G25640"/>
<dbReference type="Araport" id="AT4G25640"/>
<dbReference type="TAIR" id="AT4G25640">
    <property type="gene designation" value="DTX35"/>
</dbReference>
<dbReference type="eggNOG" id="KOG1347">
    <property type="taxonomic scope" value="Eukaryota"/>
</dbReference>
<dbReference type="HOGENOM" id="CLU_012893_1_4_1"/>
<dbReference type="InParanoid" id="F4JTB3"/>
<dbReference type="OMA" id="RRCAWRC"/>
<dbReference type="PRO" id="PR:F4JTB3"/>
<dbReference type="Proteomes" id="UP000006548">
    <property type="component" value="Chromosome 4"/>
</dbReference>
<dbReference type="ExpressionAtlas" id="F4JTB3">
    <property type="expression patterns" value="baseline and differential"/>
</dbReference>
<dbReference type="GO" id="GO:0005774">
    <property type="term" value="C:vacuolar membrane"/>
    <property type="evidence" value="ECO:0007669"/>
    <property type="project" value="UniProtKB-SubCell"/>
</dbReference>
<dbReference type="GO" id="GO:0005773">
    <property type="term" value="C:vacuole"/>
    <property type="evidence" value="ECO:0000314"/>
    <property type="project" value="UniProtKB"/>
</dbReference>
<dbReference type="GO" id="GO:0015297">
    <property type="term" value="F:antiporter activity"/>
    <property type="evidence" value="ECO:0007669"/>
    <property type="project" value="InterPro"/>
</dbReference>
<dbReference type="GO" id="GO:0042910">
    <property type="term" value="F:xenobiotic transmembrane transporter activity"/>
    <property type="evidence" value="ECO:0007669"/>
    <property type="project" value="InterPro"/>
</dbReference>
<dbReference type="GO" id="GO:0009813">
    <property type="term" value="P:flavonoid biosynthetic process"/>
    <property type="evidence" value="ECO:0000315"/>
    <property type="project" value="UniProtKB"/>
</dbReference>
<dbReference type="GO" id="GO:1990961">
    <property type="term" value="P:xenobiotic detoxification by transmembrane export across the plasma membrane"/>
    <property type="evidence" value="ECO:0007669"/>
    <property type="project" value="InterPro"/>
</dbReference>
<dbReference type="CDD" id="cd13132">
    <property type="entry name" value="MATE_eukaryotic"/>
    <property type="match status" value="1"/>
</dbReference>
<dbReference type="InterPro" id="IPR045069">
    <property type="entry name" value="MATE_euk"/>
</dbReference>
<dbReference type="InterPro" id="IPR002528">
    <property type="entry name" value="MATE_fam"/>
</dbReference>
<dbReference type="NCBIfam" id="TIGR00797">
    <property type="entry name" value="matE"/>
    <property type="match status" value="1"/>
</dbReference>
<dbReference type="PANTHER" id="PTHR11206">
    <property type="entry name" value="MULTIDRUG RESISTANCE PROTEIN"/>
    <property type="match status" value="1"/>
</dbReference>
<dbReference type="Pfam" id="PF01554">
    <property type="entry name" value="MatE"/>
    <property type="match status" value="2"/>
</dbReference>